<reference key="1">
    <citation type="submission" date="1996-07" db="EMBL/GenBank/DDBJ databases">
        <title>Genetic and sequence analyses demonstrate bifunctional nature of LEU1 gene in Candida maltosa.</title>
        <authorList>
            <person name="Becher D."/>
            <person name="Jomantiene R."/>
            <person name="Schulze S."/>
            <person name="Bode R."/>
            <person name="Oliver S.G."/>
        </authorList>
    </citation>
    <scope>NUCLEOTIDE SEQUENCE [GENOMIC DNA]</scope>
    <source>
        <strain>L4</strain>
    </source>
</reference>
<organism>
    <name type="scientific">Candida maltosa</name>
    <name type="common">Yeast</name>
    <dbReference type="NCBI Taxonomy" id="5479"/>
    <lineage>
        <taxon>Eukaryota</taxon>
        <taxon>Fungi</taxon>
        <taxon>Dikarya</taxon>
        <taxon>Ascomycota</taxon>
        <taxon>Saccharomycotina</taxon>
        <taxon>Pichiomycetes</taxon>
        <taxon>Debaryomycetaceae</taxon>
        <taxon>Candida/Lodderomyces clade</taxon>
        <taxon>Candida</taxon>
    </lineage>
</organism>
<accession>Q00464</accession>
<comment type="function">
    <text>Catalyzes the isomerization between 2-isopropylmalate and 3-isopropylmalate, via the formation of 2-isopropylmaleate.</text>
</comment>
<comment type="catalytic activity">
    <reaction>
        <text>(2R,3S)-3-isopropylmalate = (2S)-2-isopropylmalate</text>
        <dbReference type="Rhea" id="RHEA:32287"/>
        <dbReference type="ChEBI" id="CHEBI:1178"/>
        <dbReference type="ChEBI" id="CHEBI:35121"/>
        <dbReference type="EC" id="4.2.1.33"/>
    </reaction>
</comment>
<comment type="cofactor">
    <cofactor evidence="1">
        <name>[4Fe-4S] cluster</name>
        <dbReference type="ChEBI" id="CHEBI:49883"/>
    </cofactor>
    <text evidence="1">Binds 1 [4Fe-4S] cluster per subunit.</text>
</comment>
<comment type="pathway">
    <text>Amino-acid biosynthesis; L-leucine biosynthesis; L-leucine from 3-methyl-2-oxobutanoate: step 2/4.</text>
</comment>
<comment type="subunit">
    <text evidence="1">Monomer.</text>
</comment>
<comment type="similarity">
    <text evidence="2">Belongs to the aconitase/IPM isomerase family.</text>
</comment>
<sequence length="770" mass="85317">MSPKTLYDKVFEDHIVYEDESGSNLLYIDRHLVHEVTSPQAFEGLKNAGRTVRRTDCTLATVDHNIPTISRVNFKTLLTFIDQDDSRLQVQTLEQNVKDFDVTYFGMTDDRQGIVHVVGPEQGFTLPGTTVVCGDSHTSTHGAFGALAFGIGTSEVEHVLATQTTIQANPKNMRITIDGELSEGITSKDLVLHVIGVIGTAGGTGCVIEFAGKAIEDLSMEARMSICNMAIEAGARAGMIKPDEKTFEYIKGRPLAPKGDEWEKALKYWKTLHTDDGAKLHYDIKIAASDIVPTITWGNSPQDALPITASVPDPANVSDPIKKSGMERALKYQGLTPNTPFVVIKMHKAFIGSCTNSRIEDLRAAAKVAKGHKKADNVKLVLVVPGSGLIKKQAEKEGLDKIFESAGFTWREAGCSMCLGMNPDILDPEERCASTSNRNFEGRQGARSRTHLMSPAMAAAAAIKGHFTDIREFDYVDNDEPSITIEHEVEDKELQDAVYEHEKEIIEGTPGTEAERSTTSLKMNQNSKKPNQMLIKMVPITVLPFLTGITAPLYKANVDTDAIIPKQFLKTIKRTGLKNGLFYESRFVKMPMVRCQTDFVLNVEPYRQAEILLVTGDNFGCGSSREHAPWALKDFGIKSIIAPSFGDIFYNNSFKNFLLPIRIPQDVIESKLVPVVKAGHKLTIDLPNQQIKDGETGDVLIEKFDVEEFRKHCLVNGLDDIGLTLQKEEYIQEYEAKRREKFSFLEGGSKLIKPIKGTKKSIYGNKAQEW</sequence>
<protein>
    <recommendedName>
        <fullName>3-isopropylmalate dehydratase</fullName>
        <ecNumber>4.2.1.33</ecNumber>
    </recommendedName>
    <alternativeName>
        <fullName>Alpha-IPM isomerase</fullName>
        <shortName>IPMI</shortName>
    </alternativeName>
    <alternativeName>
        <fullName>Isopropylmalate isomerase</fullName>
    </alternativeName>
</protein>
<feature type="chain" id="PRO_0000076887" description="3-isopropylmalate dehydratase">
    <location>
        <begin position="1"/>
        <end position="770"/>
    </location>
</feature>
<feature type="binding site" evidence="1">
    <location>
        <position position="354"/>
    </location>
    <ligand>
        <name>[4Fe-4S] cluster</name>
        <dbReference type="ChEBI" id="CHEBI:49883"/>
    </ligand>
</feature>
<feature type="binding site" evidence="1">
    <location>
        <position position="415"/>
    </location>
    <ligand>
        <name>[4Fe-4S] cluster</name>
        <dbReference type="ChEBI" id="CHEBI:49883"/>
    </ligand>
</feature>
<feature type="binding site" evidence="1">
    <location>
        <position position="418"/>
    </location>
    <ligand>
        <name>[4Fe-4S] cluster</name>
        <dbReference type="ChEBI" id="CHEBI:49883"/>
    </ligand>
</feature>
<name>LEUC_CANMA</name>
<gene>
    <name type="primary">LEU1</name>
</gene>
<evidence type="ECO:0000250" key="1"/>
<evidence type="ECO:0000305" key="2"/>
<proteinExistence type="inferred from homology"/>
<keyword id="KW-0004">4Fe-4S</keyword>
<keyword id="KW-0028">Amino-acid biosynthesis</keyword>
<keyword id="KW-0100">Branched-chain amino acid biosynthesis</keyword>
<keyword id="KW-0408">Iron</keyword>
<keyword id="KW-0411">Iron-sulfur</keyword>
<keyword id="KW-0432">Leucine biosynthesis</keyword>
<keyword id="KW-0456">Lyase</keyword>
<keyword id="KW-0479">Metal-binding</keyword>
<dbReference type="EC" id="4.2.1.33"/>
<dbReference type="EMBL" id="U60167">
    <property type="protein sequence ID" value="AAB03335.1"/>
    <property type="molecule type" value="Genomic_DNA"/>
</dbReference>
<dbReference type="SMR" id="Q00464"/>
<dbReference type="UniPathway" id="UPA00048">
    <property type="reaction ID" value="UER00071"/>
</dbReference>
<dbReference type="GO" id="GO:0009316">
    <property type="term" value="C:3-isopropylmalate dehydratase complex"/>
    <property type="evidence" value="ECO:0007669"/>
    <property type="project" value="InterPro"/>
</dbReference>
<dbReference type="GO" id="GO:0003861">
    <property type="term" value="F:3-isopropylmalate dehydratase activity"/>
    <property type="evidence" value="ECO:0007669"/>
    <property type="project" value="UniProtKB-EC"/>
</dbReference>
<dbReference type="GO" id="GO:0051539">
    <property type="term" value="F:4 iron, 4 sulfur cluster binding"/>
    <property type="evidence" value="ECO:0007669"/>
    <property type="project" value="UniProtKB-KW"/>
</dbReference>
<dbReference type="GO" id="GO:0046872">
    <property type="term" value="F:metal ion binding"/>
    <property type="evidence" value="ECO:0007669"/>
    <property type="project" value="UniProtKB-KW"/>
</dbReference>
<dbReference type="GO" id="GO:0009098">
    <property type="term" value="P:L-leucine biosynthetic process"/>
    <property type="evidence" value="ECO:0007669"/>
    <property type="project" value="UniProtKB-UniPathway"/>
</dbReference>
<dbReference type="CDD" id="cd01583">
    <property type="entry name" value="IPMI"/>
    <property type="match status" value="1"/>
</dbReference>
<dbReference type="CDD" id="cd01577">
    <property type="entry name" value="IPMI_Swivel"/>
    <property type="match status" value="1"/>
</dbReference>
<dbReference type="FunFam" id="3.30.499.10:FF:000006">
    <property type="entry name" value="3-isopropylmalate dehydratase large subunit"/>
    <property type="match status" value="1"/>
</dbReference>
<dbReference type="FunFam" id="3.30.499.10:FF:000007">
    <property type="entry name" value="3-isopropylmalate dehydratase large subunit"/>
    <property type="match status" value="1"/>
</dbReference>
<dbReference type="FunFam" id="3.20.19.10:FF:000003">
    <property type="entry name" value="3-isopropylmalate dehydratase small subunit"/>
    <property type="match status" value="1"/>
</dbReference>
<dbReference type="Gene3D" id="3.30.499.10">
    <property type="entry name" value="Aconitase, domain 3"/>
    <property type="match status" value="2"/>
</dbReference>
<dbReference type="Gene3D" id="3.20.19.10">
    <property type="entry name" value="Aconitase, domain 4"/>
    <property type="match status" value="1"/>
</dbReference>
<dbReference type="HAMAP" id="MF_01026">
    <property type="entry name" value="LeuC_type1"/>
    <property type="match status" value="1"/>
</dbReference>
<dbReference type="HAMAP" id="MF_01031">
    <property type="entry name" value="LeuD_type1"/>
    <property type="match status" value="1"/>
</dbReference>
<dbReference type="InterPro" id="IPR004430">
    <property type="entry name" value="3-IsopropMal_deHydase_lsu"/>
</dbReference>
<dbReference type="InterPro" id="IPR004431">
    <property type="entry name" value="3-IsopropMal_deHydase_ssu"/>
</dbReference>
<dbReference type="InterPro" id="IPR012235">
    <property type="entry name" value="3-IsopropMal_deHydtase_ssu/lsu"/>
</dbReference>
<dbReference type="InterPro" id="IPR015931">
    <property type="entry name" value="Acnase/IPM_dHydase_lsu_aba_1/3"/>
</dbReference>
<dbReference type="InterPro" id="IPR001030">
    <property type="entry name" value="Acoase/IPM_deHydtase_lsu_aba"/>
</dbReference>
<dbReference type="InterPro" id="IPR015928">
    <property type="entry name" value="Aconitase/3IPM_dehydase_swvl"/>
</dbReference>
<dbReference type="InterPro" id="IPR018136">
    <property type="entry name" value="Aconitase_4Fe-4S_BS"/>
</dbReference>
<dbReference type="InterPro" id="IPR036008">
    <property type="entry name" value="Aconitase_4Fe-4S_dom"/>
</dbReference>
<dbReference type="InterPro" id="IPR000573">
    <property type="entry name" value="AconitaseA/IPMdHydase_ssu_swvl"/>
</dbReference>
<dbReference type="InterPro" id="IPR050067">
    <property type="entry name" value="IPM_dehydratase_rel_enz"/>
</dbReference>
<dbReference type="InterPro" id="IPR033941">
    <property type="entry name" value="IPMI_cat"/>
</dbReference>
<dbReference type="InterPro" id="IPR033940">
    <property type="entry name" value="IPMI_Swivel"/>
</dbReference>
<dbReference type="NCBIfam" id="TIGR00170">
    <property type="entry name" value="leuC"/>
    <property type="match status" value="1"/>
</dbReference>
<dbReference type="NCBIfam" id="TIGR00171">
    <property type="entry name" value="leuD"/>
    <property type="match status" value="1"/>
</dbReference>
<dbReference type="NCBIfam" id="NF002458">
    <property type="entry name" value="PRK01641.1"/>
    <property type="match status" value="1"/>
</dbReference>
<dbReference type="NCBIfam" id="NF004016">
    <property type="entry name" value="PRK05478.1"/>
    <property type="match status" value="1"/>
</dbReference>
<dbReference type="NCBIfam" id="NF009116">
    <property type="entry name" value="PRK12466.1"/>
    <property type="match status" value="1"/>
</dbReference>
<dbReference type="PANTHER" id="PTHR43822:SF9">
    <property type="entry name" value="3-ISOPROPYLMALATE DEHYDRATASE"/>
    <property type="match status" value="1"/>
</dbReference>
<dbReference type="PANTHER" id="PTHR43822">
    <property type="entry name" value="HOMOACONITASE, MITOCHONDRIAL-RELATED"/>
    <property type="match status" value="1"/>
</dbReference>
<dbReference type="Pfam" id="PF00330">
    <property type="entry name" value="Aconitase"/>
    <property type="match status" value="1"/>
</dbReference>
<dbReference type="Pfam" id="PF00694">
    <property type="entry name" value="Aconitase_C"/>
    <property type="match status" value="1"/>
</dbReference>
<dbReference type="PIRSF" id="PIRSF001418">
    <property type="entry name" value="ACN"/>
    <property type="match status" value="1"/>
</dbReference>
<dbReference type="PRINTS" id="PR00415">
    <property type="entry name" value="ACONITASE"/>
</dbReference>
<dbReference type="SUPFAM" id="SSF53732">
    <property type="entry name" value="Aconitase iron-sulfur domain"/>
    <property type="match status" value="1"/>
</dbReference>
<dbReference type="SUPFAM" id="SSF52016">
    <property type="entry name" value="LeuD/IlvD-like"/>
    <property type="match status" value="1"/>
</dbReference>
<dbReference type="PROSITE" id="PS00450">
    <property type="entry name" value="ACONITASE_1"/>
    <property type="match status" value="1"/>
</dbReference>
<dbReference type="PROSITE" id="PS01244">
    <property type="entry name" value="ACONITASE_2"/>
    <property type="match status" value="1"/>
</dbReference>